<gene>
    <name evidence="1" type="primary">prfC</name>
    <name type="ordered locus">CbuK_0680</name>
</gene>
<proteinExistence type="inferred from homology"/>
<accession>B6J6N8</accession>
<comment type="function">
    <text evidence="1">Increases the formation of ribosomal termination complexes and stimulates activities of RF-1 and RF-2. It binds guanine nucleotides and has strong preference for UGA stop codons. It may interact directly with the ribosome. The stimulation of RF-1 and RF-2 is significantly reduced by GTP and GDP, but not by GMP.</text>
</comment>
<comment type="subcellular location">
    <subcellularLocation>
        <location evidence="1">Cytoplasm</location>
    </subcellularLocation>
</comment>
<comment type="similarity">
    <text evidence="1">Belongs to the TRAFAC class translation factor GTPase superfamily. Classic translation factor GTPase family. PrfC subfamily.</text>
</comment>
<organism>
    <name type="scientific">Coxiella burnetii (strain CbuK_Q154)</name>
    <name type="common">Coxiella burnetii (strain Q154)</name>
    <dbReference type="NCBI Taxonomy" id="434924"/>
    <lineage>
        <taxon>Bacteria</taxon>
        <taxon>Pseudomonadati</taxon>
        <taxon>Pseudomonadota</taxon>
        <taxon>Gammaproteobacteria</taxon>
        <taxon>Legionellales</taxon>
        <taxon>Coxiellaceae</taxon>
        <taxon>Coxiella</taxon>
    </lineage>
</organism>
<name>RF3_COXB1</name>
<feature type="chain" id="PRO_1000092475" description="Peptide chain release factor 3">
    <location>
        <begin position="1"/>
        <end position="525"/>
    </location>
</feature>
<feature type="domain" description="tr-type G">
    <location>
        <begin position="8"/>
        <end position="276"/>
    </location>
</feature>
<feature type="binding site" evidence="1">
    <location>
        <begin position="17"/>
        <end position="24"/>
    </location>
    <ligand>
        <name>GTP</name>
        <dbReference type="ChEBI" id="CHEBI:37565"/>
    </ligand>
</feature>
<feature type="binding site" evidence="1">
    <location>
        <begin position="85"/>
        <end position="89"/>
    </location>
    <ligand>
        <name>GTP</name>
        <dbReference type="ChEBI" id="CHEBI:37565"/>
    </ligand>
</feature>
<feature type="binding site" evidence="1">
    <location>
        <begin position="139"/>
        <end position="142"/>
    </location>
    <ligand>
        <name>GTP</name>
        <dbReference type="ChEBI" id="CHEBI:37565"/>
    </ligand>
</feature>
<protein>
    <recommendedName>
        <fullName evidence="1">Peptide chain release factor 3</fullName>
        <shortName evidence="1">RF-3</shortName>
    </recommendedName>
</protein>
<reference key="1">
    <citation type="journal article" date="2009" name="Infect. Immun.">
        <title>Comparative genomics reveal extensive transposon-mediated genomic plasticity and diversity among potential effector proteins within the genus Coxiella.</title>
        <authorList>
            <person name="Beare P.A."/>
            <person name="Unsworth N."/>
            <person name="Andoh M."/>
            <person name="Voth D.E."/>
            <person name="Omsland A."/>
            <person name="Gilk S.D."/>
            <person name="Williams K.P."/>
            <person name="Sobral B.W."/>
            <person name="Kupko J.J. III"/>
            <person name="Porcella S.F."/>
            <person name="Samuel J.E."/>
            <person name="Heinzen R.A."/>
        </authorList>
    </citation>
    <scope>NUCLEOTIDE SEQUENCE [LARGE SCALE GENOMIC DNA]</scope>
    <source>
        <strain>CbuK_Q154</strain>
    </source>
</reference>
<keyword id="KW-0963">Cytoplasm</keyword>
<keyword id="KW-0342">GTP-binding</keyword>
<keyword id="KW-0547">Nucleotide-binding</keyword>
<keyword id="KW-0648">Protein biosynthesis</keyword>
<dbReference type="EMBL" id="CP001020">
    <property type="protein sequence ID" value="ACJ19937.1"/>
    <property type="molecule type" value="Genomic_DNA"/>
</dbReference>
<dbReference type="RefSeq" id="WP_005768909.1">
    <property type="nucleotide sequence ID" value="NC_011528.1"/>
</dbReference>
<dbReference type="SMR" id="B6J6N8"/>
<dbReference type="KEGG" id="cbc:CbuK_0680"/>
<dbReference type="HOGENOM" id="CLU_002794_2_1_6"/>
<dbReference type="GO" id="GO:0005829">
    <property type="term" value="C:cytosol"/>
    <property type="evidence" value="ECO:0007669"/>
    <property type="project" value="TreeGrafter"/>
</dbReference>
<dbReference type="GO" id="GO:0005525">
    <property type="term" value="F:GTP binding"/>
    <property type="evidence" value="ECO:0007669"/>
    <property type="project" value="UniProtKB-UniRule"/>
</dbReference>
<dbReference type="GO" id="GO:0003924">
    <property type="term" value="F:GTPase activity"/>
    <property type="evidence" value="ECO:0007669"/>
    <property type="project" value="InterPro"/>
</dbReference>
<dbReference type="GO" id="GO:0097216">
    <property type="term" value="F:guanosine tetraphosphate binding"/>
    <property type="evidence" value="ECO:0007669"/>
    <property type="project" value="UniProtKB-ARBA"/>
</dbReference>
<dbReference type="GO" id="GO:0016150">
    <property type="term" value="F:translation release factor activity, codon nonspecific"/>
    <property type="evidence" value="ECO:0007669"/>
    <property type="project" value="TreeGrafter"/>
</dbReference>
<dbReference type="GO" id="GO:0016149">
    <property type="term" value="F:translation release factor activity, codon specific"/>
    <property type="evidence" value="ECO:0007669"/>
    <property type="project" value="UniProtKB-UniRule"/>
</dbReference>
<dbReference type="GO" id="GO:0006449">
    <property type="term" value="P:regulation of translational termination"/>
    <property type="evidence" value="ECO:0007669"/>
    <property type="project" value="UniProtKB-UniRule"/>
</dbReference>
<dbReference type="CDD" id="cd04169">
    <property type="entry name" value="RF3"/>
    <property type="match status" value="1"/>
</dbReference>
<dbReference type="CDD" id="cd03689">
    <property type="entry name" value="RF3_II"/>
    <property type="match status" value="1"/>
</dbReference>
<dbReference type="CDD" id="cd16259">
    <property type="entry name" value="RF3_III"/>
    <property type="match status" value="1"/>
</dbReference>
<dbReference type="FunFam" id="2.40.30.10:FF:000040">
    <property type="entry name" value="Peptide chain release factor 3"/>
    <property type="match status" value="1"/>
</dbReference>
<dbReference type="FunFam" id="3.30.70.3280:FF:000001">
    <property type="entry name" value="Peptide chain release factor 3"/>
    <property type="match status" value="1"/>
</dbReference>
<dbReference type="FunFam" id="3.40.50.300:FF:000542">
    <property type="entry name" value="Peptide chain release factor 3"/>
    <property type="match status" value="1"/>
</dbReference>
<dbReference type="Gene3D" id="3.40.50.300">
    <property type="entry name" value="P-loop containing nucleotide triphosphate hydrolases"/>
    <property type="match status" value="2"/>
</dbReference>
<dbReference type="Gene3D" id="3.30.70.3280">
    <property type="entry name" value="Peptide chain release factor 3, domain III"/>
    <property type="match status" value="1"/>
</dbReference>
<dbReference type="HAMAP" id="MF_00072">
    <property type="entry name" value="Rel_fac_3"/>
    <property type="match status" value="1"/>
</dbReference>
<dbReference type="InterPro" id="IPR053905">
    <property type="entry name" value="EF-G-like_DII"/>
</dbReference>
<dbReference type="InterPro" id="IPR035647">
    <property type="entry name" value="EFG_III/V"/>
</dbReference>
<dbReference type="InterPro" id="IPR031157">
    <property type="entry name" value="G_TR_CS"/>
</dbReference>
<dbReference type="InterPro" id="IPR027417">
    <property type="entry name" value="P-loop_NTPase"/>
</dbReference>
<dbReference type="InterPro" id="IPR004548">
    <property type="entry name" value="PrfC"/>
</dbReference>
<dbReference type="InterPro" id="IPR032090">
    <property type="entry name" value="RF3_C"/>
</dbReference>
<dbReference type="InterPro" id="IPR038467">
    <property type="entry name" value="RF3_dom_3_sf"/>
</dbReference>
<dbReference type="InterPro" id="IPR041732">
    <property type="entry name" value="RF3_GTP-bd"/>
</dbReference>
<dbReference type="InterPro" id="IPR005225">
    <property type="entry name" value="Small_GTP-bd"/>
</dbReference>
<dbReference type="InterPro" id="IPR000795">
    <property type="entry name" value="T_Tr_GTP-bd_dom"/>
</dbReference>
<dbReference type="InterPro" id="IPR009000">
    <property type="entry name" value="Transl_B-barrel_sf"/>
</dbReference>
<dbReference type="NCBIfam" id="TIGR00503">
    <property type="entry name" value="prfC"/>
    <property type="match status" value="1"/>
</dbReference>
<dbReference type="NCBIfam" id="NF001964">
    <property type="entry name" value="PRK00741.1"/>
    <property type="match status" value="1"/>
</dbReference>
<dbReference type="NCBIfam" id="TIGR00231">
    <property type="entry name" value="small_GTP"/>
    <property type="match status" value="1"/>
</dbReference>
<dbReference type="PANTHER" id="PTHR43556">
    <property type="entry name" value="PEPTIDE CHAIN RELEASE FACTOR RF3"/>
    <property type="match status" value="1"/>
</dbReference>
<dbReference type="PANTHER" id="PTHR43556:SF2">
    <property type="entry name" value="PEPTIDE CHAIN RELEASE FACTOR RF3"/>
    <property type="match status" value="1"/>
</dbReference>
<dbReference type="Pfam" id="PF22042">
    <property type="entry name" value="EF-G_D2"/>
    <property type="match status" value="1"/>
</dbReference>
<dbReference type="Pfam" id="PF00009">
    <property type="entry name" value="GTP_EFTU"/>
    <property type="match status" value="1"/>
</dbReference>
<dbReference type="Pfam" id="PF16658">
    <property type="entry name" value="RF3_C"/>
    <property type="match status" value="1"/>
</dbReference>
<dbReference type="PRINTS" id="PR00315">
    <property type="entry name" value="ELONGATNFCT"/>
</dbReference>
<dbReference type="SUPFAM" id="SSF54980">
    <property type="entry name" value="EF-G C-terminal domain-like"/>
    <property type="match status" value="1"/>
</dbReference>
<dbReference type="SUPFAM" id="SSF52540">
    <property type="entry name" value="P-loop containing nucleoside triphosphate hydrolases"/>
    <property type="match status" value="1"/>
</dbReference>
<dbReference type="SUPFAM" id="SSF50447">
    <property type="entry name" value="Translation proteins"/>
    <property type="match status" value="1"/>
</dbReference>
<dbReference type="PROSITE" id="PS00301">
    <property type="entry name" value="G_TR_1"/>
    <property type="match status" value="1"/>
</dbReference>
<dbReference type="PROSITE" id="PS51722">
    <property type="entry name" value="G_TR_2"/>
    <property type="match status" value="1"/>
</dbReference>
<sequence>MSVEKQTAMRRTFAIISHPDAGKTTLTEKLLLFGGAIQLAGTVKSRKAARHATSDWMELEKQRGISVTTSVMQFPYKDYLINLLDTPGHADFTEDTYRTLTAVDSALMVIDAAKGVEPRTIKLMEVCRLRHTPIMTFINKMDRDTRPSIELLDEIESILRIHCAPVTWPIGMGKYFKGIYHLIEDAIYLYQPGKHERVGESERIEGINNPELDKKLGDLASELRNEIELVKGASHPFEREGYLKGELTPIFFGSAINNFGVGELLDAFVKEAPPPQGRETNSRLVKPEEEKFSGFVFKIQANMDPGHRDRIAFLRIASGQYQKGMKAYHVRLKKEIQINNALTFMAGKRENAEEAWPGDIIGLHNHGTIQIGDTFTQGERFKFTGIPNFASELFRLVRLKDPLKQKALLKGLTQLSEEGATQLFRPLDSNELILGAVGLLQFDVVAYRLENEYNVKCVYESVNVVTARWVICDDKAVLERFNQEQSRNLAYDGGGHLTYLAPSRVNLEITMEKWPEIQFSETREH</sequence>
<evidence type="ECO:0000255" key="1">
    <source>
        <dbReference type="HAMAP-Rule" id="MF_00072"/>
    </source>
</evidence>